<gene>
    <name evidence="1" type="primary">cysS</name>
    <name type="ordered locus">SACOL0576</name>
</gene>
<proteinExistence type="inferred from homology"/>
<evidence type="ECO:0000255" key="1">
    <source>
        <dbReference type="HAMAP-Rule" id="MF_00041"/>
    </source>
</evidence>
<protein>
    <recommendedName>
        <fullName evidence="1">Cysteine--tRNA ligase</fullName>
        <ecNumber evidence="1">6.1.1.16</ecNumber>
    </recommendedName>
    <alternativeName>
        <fullName evidence="1">Cysteinyl-tRNA synthetase</fullName>
        <shortName evidence="1">CysRS</shortName>
    </alternativeName>
</protein>
<comment type="catalytic activity">
    <reaction evidence="1">
        <text>tRNA(Cys) + L-cysteine + ATP = L-cysteinyl-tRNA(Cys) + AMP + diphosphate</text>
        <dbReference type="Rhea" id="RHEA:17773"/>
        <dbReference type="Rhea" id="RHEA-COMP:9661"/>
        <dbReference type="Rhea" id="RHEA-COMP:9679"/>
        <dbReference type="ChEBI" id="CHEBI:30616"/>
        <dbReference type="ChEBI" id="CHEBI:33019"/>
        <dbReference type="ChEBI" id="CHEBI:35235"/>
        <dbReference type="ChEBI" id="CHEBI:78442"/>
        <dbReference type="ChEBI" id="CHEBI:78517"/>
        <dbReference type="ChEBI" id="CHEBI:456215"/>
        <dbReference type="EC" id="6.1.1.16"/>
    </reaction>
</comment>
<comment type="cofactor">
    <cofactor evidence="1">
        <name>Zn(2+)</name>
        <dbReference type="ChEBI" id="CHEBI:29105"/>
    </cofactor>
    <text evidence="1">Binds 1 zinc ion per subunit.</text>
</comment>
<comment type="subunit">
    <text evidence="1">Monomer.</text>
</comment>
<comment type="subcellular location">
    <subcellularLocation>
        <location evidence="1">Cytoplasm</location>
    </subcellularLocation>
</comment>
<comment type="similarity">
    <text evidence="1">Belongs to the class-I aminoacyl-tRNA synthetase family.</text>
</comment>
<sequence length="466" mass="53685">MITLYNTLTRQKEVFKPIEPGKVKMYVCGPTVYNYIHIGNARPAINYDVVRRYFEYQGYNVEYVSNFTDVDDKLIKRSQELNQSVPEIAEKYIAAFHEDVGALNVRKATSNPRVMDHMDDIIQFIKDLVDQGYAYESGGDVYFRTRKFEGYGKLSHQSIDDLKVGARIDAGEHKEDALDFTLWKKAKPGEISWDSPFGEGRPGWHIECSVMAFHELGPTIDIHAGGSDLQFPHHENEIAQSEAHNHAPFANYWMHNGFINIDNEKMSKSLGNFILVHDIIKEVDPDVLRFFMISVHYRSPINYNLELVESARSGLERIRNSYQLIEERAQIATNIENQQTYIDQIDAILNRFETVMNDDFNTANAITAWYDLAKLANKYVLENTTSTEVIDKFKAVYQIFSDVLGVPLKSKNADELLDEDVEKLIEERNEARKNKDFARADEIRDMLKSQNIILEDTPQGVRFKRG</sequence>
<accession>Q5HIE5</accession>
<name>SYC_STAAC</name>
<keyword id="KW-0030">Aminoacyl-tRNA synthetase</keyword>
<keyword id="KW-0067">ATP-binding</keyword>
<keyword id="KW-0963">Cytoplasm</keyword>
<keyword id="KW-0436">Ligase</keyword>
<keyword id="KW-0479">Metal-binding</keyword>
<keyword id="KW-0547">Nucleotide-binding</keyword>
<keyword id="KW-0648">Protein biosynthesis</keyword>
<keyword id="KW-0862">Zinc</keyword>
<organism>
    <name type="scientific">Staphylococcus aureus (strain COL)</name>
    <dbReference type="NCBI Taxonomy" id="93062"/>
    <lineage>
        <taxon>Bacteria</taxon>
        <taxon>Bacillati</taxon>
        <taxon>Bacillota</taxon>
        <taxon>Bacilli</taxon>
        <taxon>Bacillales</taxon>
        <taxon>Staphylococcaceae</taxon>
        <taxon>Staphylococcus</taxon>
    </lineage>
</organism>
<reference key="1">
    <citation type="journal article" date="2005" name="J. Bacteriol.">
        <title>Insights on evolution of virulence and resistance from the complete genome analysis of an early methicillin-resistant Staphylococcus aureus strain and a biofilm-producing methicillin-resistant Staphylococcus epidermidis strain.</title>
        <authorList>
            <person name="Gill S.R."/>
            <person name="Fouts D.E."/>
            <person name="Archer G.L."/>
            <person name="Mongodin E.F."/>
            <person name="DeBoy R.T."/>
            <person name="Ravel J."/>
            <person name="Paulsen I.T."/>
            <person name="Kolonay J.F."/>
            <person name="Brinkac L.M."/>
            <person name="Beanan M.J."/>
            <person name="Dodson R.J."/>
            <person name="Daugherty S.C."/>
            <person name="Madupu R."/>
            <person name="Angiuoli S.V."/>
            <person name="Durkin A.S."/>
            <person name="Haft D.H."/>
            <person name="Vamathevan J.J."/>
            <person name="Khouri H."/>
            <person name="Utterback T.R."/>
            <person name="Lee C."/>
            <person name="Dimitrov G."/>
            <person name="Jiang L."/>
            <person name="Qin H."/>
            <person name="Weidman J."/>
            <person name="Tran K."/>
            <person name="Kang K.H."/>
            <person name="Hance I.R."/>
            <person name="Nelson K.E."/>
            <person name="Fraser C.M."/>
        </authorList>
    </citation>
    <scope>NUCLEOTIDE SEQUENCE [LARGE SCALE GENOMIC DNA]</scope>
    <source>
        <strain>COL</strain>
    </source>
</reference>
<feature type="chain" id="PRO_0000159477" description="Cysteine--tRNA ligase">
    <location>
        <begin position="1"/>
        <end position="466"/>
    </location>
</feature>
<feature type="short sequence motif" description="'HIGH' region">
    <location>
        <begin position="30"/>
        <end position="40"/>
    </location>
</feature>
<feature type="short sequence motif" description="'KMSKS' region">
    <location>
        <begin position="265"/>
        <end position="269"/>
    </location>
</feature>
<feature type="binding site" evidence="1">
    <location>
        <position position="28"/>
    </location>
    <ligand>
        <name>Zn(2+)</name>
        <dbReference type="ChEBI" id="CHEBI:29105"/>
    </ligand>
</feature>
<feature type="binding site" evidence="1">
    <location>
        <position position="208"/>
    </location>
    <ligand>
        <name>Zn(2+)</name>
        <dbReference type="ChEBI" id="CHEBI:29105"/>
    </ligand>
</feature>
<feature type="binding site" evidence="1">
    <location>
        <position position="233"/>
    </location>
    <ligand>
        <name>Zn(2+)</name>
        <dbReference type="ChEBI" id="CHEBI:29105"/>
    </ligand>
</feature>
<feature type="binding site" evidence="1">
    <location>
        <position position="237"/>
    </location>
    <ligand>
        <name>Zn(2+)</name>
        <dbReference type="ChEBI" id="CHEBI:29105"/>
    </ligand>
</feature>
<feature type="binding site" evidence="1">
    <location>
        <position position="268"/>
    </location>
    <ligand>
        <name>ATP</name>
        <dbReference type="ChEBI" id="CHEBI:30616"/>
    </ligand>
</feature>
<dbReference type="EC" id="6.1.1.16" evidence="1"/>
<dbReference type="EMBL" id="CP000046">
    <property type="protein sequence ID" value="AAW37686.1"/>
    <property type="molecule type" value="Genomic_DNA"/>
</dbReference>
<dbReference type="RefSeq" id="WP_000631963.1">
    <property type="nucleotide sequence ID" value="NZ_JBGOFO010000009.1"/>
</dbReference>
<dbReference type="SMR" id="Q5HIE5"/>
<dbReference type="KEGG" id="sac:SACOL0576"/>
<dbReference type="HOGENOM" id="CLU_013528_0_1_9"/>
<dbReference type="Proteomes" id="UP000000530">
    <property type="component" value="Chromosome"/>
</dbReference>
<dbReference type="GO" id="GO:0005829">
    <property type="term" value="C:cytosol"/>
    <property type="evidence" value="ECO:0007669"/>
    <property type="project" value="TreeGrafter"/>
</dbReference>
<dbReference type="GO" id="GO:0005524">
    <property type="term" value="F:ATP binding"/>
    <property type="evidence" value="ECO:0007669"/>
    <property type="project" value="UniProtKB-UniRule"/>
</dbReference>
<dbReference type="GO" id="GO:0004817">
    <property type="term" value="F:cysteine-tRNA ligase activity"/>
    <property type="evidence" value="ECO:0007669"/>
    <property type="project" value="UniProtKB-UniRule"/>
</dbReference>
<dbReference type="GO" id="GO:0008270">
    <property type="term" value="F:zinc ion binding"/>
    <property type="evidence" value="ECO:0007669"/>
    <property type="project" value="UniProtKB-UniRule"/>
</dbReference>
<dbReference type="GO" id="GO:0006423">
    <property type="term" value="P:cysteinyl-tRNA aminoacylation"/>
    <property type="evidence" value="ECO:0007669"/>
    <property type="project" value="UniProtKB-UniRule"/>
</dbReference>
<dbReference type="CDD" id="cd00672">
    <property type="entry name" value="CysRS_core"/>
    <property type="match status" value="1"/>
</dbReference>
<dbReference type="FunFam" id="1.20.120.1910:FF:000002">
    <property type="entry name" value="Cysteine--tRNA ligase"/>
    <property type="match status" value="1"/>
</dbReference>
<dbReference type="FunFam" id="3.40.50.620:FF:000009">
    <property type="entry name" value="Cysteine--tRNA ligase"/>
    <property type="match status" value="1"/>
</dbReference>
<dbReference type="Gene3D" id="1.20.120.1910">
    <property type="entry name" value="Cysteine-tRNA ligase, C-terminal anti-codon recognition domain"/>
    <property type="match status" value="1"/>
</dbReference>
<dbReference type="Gene3D" id="3.40.50.620">
    <property type="entry name" value="HUPs"/>
    <property type="match status" value="1"/>
</dbReference>
<dbReference type="HAMAP" id="MF_00041">
    <property type="entry name" value="Cys_tRNA_synth"/>
    <property type="match status" value="1"/>
</dbReference>
<dbReference type="InterPro" id="IPR015803">
    <property type="entry name" value="Cys-tRNA-ligase"/>
</dbReference>
<dbReference type="InterPro" id="IPR015273">
    <property type="entry name" value="Cys-tRNA-synt_Ia_DALR"/>
</dbReference>
<dbReference type="InterPro" id="IPR024909">
    <property type="entry name" value="Cys-tRNA/MSH_ligase"/>
</dbReference>
<dbReference type="InterPro" id="IPR056411">
    <property type="entry name" value="CysS_C"/>
</dbReference>
<dbReference type="InterPro" id="IPR014729">
    <property type="entry name" value="Rossmann-like_a/b/a_fold"/>
</dbReference>
<dbReference type="InterPro" id="IPR032678">
    <property type="entry name" value="tRNA-synt_1_cat_dom"/>
</dbReference>
<dbReference type="InterPro" id="IPR009080">
    <property type="entry name" value="tRNAsynth_Ia_anticodon-bd"/>
</dbReference>
<dbReference type="NCBIfam" id="TIGR00435">
    <property type="entry name" value="cysS"/>
    <property type="match status" value="1"/>
</dbReference>
<dbReference type="PANTHER" id="PTHR10890:SF3">
    <property type="entry name" value="CYSTEINE--TRNA LIGASE, CYTOPLASMIC"/>
    <property type="match status" value="1"/>
</dbReference>
<dbReference type="PANTHER" id="PTHR10890">
    <property type="entry name" value="CYSTEINYL-TRNA SYNTHETASE"/>
    <property type="match status" value="1"/>
</dbReference>
<dbReference type="Pfam" id="PF23493">
    <property type="entry name" value="CysS_C"/>
    <property type="match status" value="1"/>
</dbReference>
<dbReference type="Pfam" id="PF09190">
    <property type="entry name" value="DALR_2"/>
    <property type="match status" value="1"/>
</dbReference>
<dbReference type="Pfam" id="PF01406">
    <property type="entry name" value="tRNA-synt_1e"/>
    <property type="match status" value="1"/>
</dbReference>
<dbReference type="PRINTS" id="PR00983">
    <property type="entry name" value="TRNASYNTHCYS"/>
</dbReference>
<dbReference type="SMART" id="SM00840">
    <property type="entry name" value="DALR_2"/>
    <property type="match status" value="1"/>
</dbReference>
<dbReference type="SUPFAM" id="SSF47323">
    <property type="entry name" value="Anticodon-binding domain of a subclass of class I aminoacyl-tRNA synthetases"/>
    <property type="match status" value="1"/>
</dbReference>
<dbReference type="SUPFAM" id="SSF52374">
    <property type="entry name" value="Nucleotidylyl transferase"/>
    <property type="match status" value="1"/>
</dbReference>